<feature type="chain" id="PRO_0000193719" description="Chitin synthase 3">
    <location>
        <begin position="1"/>
        <end position="1029"/>
    </location>
</feature>
<feature type="transmembrane region" description="Helical" evidence="1">
    <location>
        <begin position="723"/>
        <end position="743"/>
    </location>
</feature>
<feature type="transmembrane region" description="Helical" evidence="1">
    <location>
        <begin position="760"/>
        <end position="780"/>
    </location>
</feature>
<feature type="transmembrane region" description="Helical" evidence="1">
    <location>
        <begin position="796"/>
        <end position="816"/>
    </location>
</feature>
<feature type="transmembrane region" description="Helical" evidence="1">
    <location>
        <begin position="830"/>
        <end position="850"/>
    </location>
</feature>
<feature type="transmembrane region" description="Helical" evidence="1">
    <location>
        <begin position="860"/>
        <end position="880"/>
    </location>
</feature>
<feature type="transmembrane region" description="Helical" evidence="1">
    <location>
        <begin position="963"/>
        <end position="983"/>
    </location>
</feature>
<feature type="transmembrane region" description="Helical" evidence="1">
    <location>
        <begin position="998"/>
        <end position="1018"/>
    </location>
</feature>
<feature type="region of interest" description="Disordered" evidence="2">
    <location>
        <begin position="1"/>
        <end position="29"/>
    </location>
</feature>
<feature type="region of interest" description="Disordered" evidence="2">
    <location>
        <begin position="46"/>
        <end position="105"/>
    </location>
</feature>
<feature type="region of interest" description="Disordered" evidence="2">
    <location>
        <begin position="168"/>
        <end position="209"/>
    </location>
</feature>
<feature type="compositionally biased region" description="Low complexity" evidence="2">
    <location>
        <begin position="46"/>
        <end position="71"/>
    </location>
</feature>
<feature type="compositionally biased region" description="Polar residues" evidence="2">
    <location>
        <begin position="76"/>
        <end position="91"/>
    </location>
</feature>
<feature type="compositionally biased region" description="Basic and acidic residues" evidence="2">
    <location>
        <begin position="191"/>
        <end position="202"/>
    </location>
</feature>
<feature type="glycosylation site" description="N-linked (GlcNAc...) asparagine" evidence="1">
    <location>
        <position position="37"/>
    </location>
</feature>
<feature type="glycosylation site" description="N-linked (GlcNAc...) asparagine" evidence="1">
    <location>
        <position position="401"/>
    </location>
</feature>
<feature type="glycosylation site" description="N-linked (GlcNAc...) asparagine" evidence="1">
    <location>
        <position position="514"/>
    </location>
</feature>
<feature type="glycosylation site" description="N-linked (GlcNAc...) asparagine" evidence="1">
    <location>
        <position position="527"/>
    </location>
</feature>
<feature type="glycosylation site" description="N-linked (GlcNAc...) asparagine" evidence="1">
    <location>
        <position position="689"/>
    </location>
</feature>
<feature type="sequence conflict" description="In Ref. 3; CAA61027." evidence="9" ref="3">
    <original>A</original>
    <variation>G</variation>
    <location>
        <position position="8"/>
    </location>
</feature>
<feature type="sequence conflict" description="In Ref. 3; CAA61027." evidence="9" ref="3">
    <original>AA</original>
    <variation>G</variation>
    <location>
        <begin position="12"/>
        <end position="13"/>
    </location>
</feature>
<feature type="sequence conflict" description="In Ref. 3; CAA61027." evidence="9" ref="3">
    <original>D</original>
    <variation>A</variation>
    <location>
        <position position="29"/>
    </location>
</feature>
<feature type="sequence conflict" description="In Ref. 3; CAA61027." evidence="9" ref="3">
    <original>A</original>
    <variation>E</variation>
    <location>
        <position position="62"/>
    </location>
</feature>
<feature type="sequence conflict" description="In Ref. 3; CAA61027." evidence="9" ref="3">
    <original>S</original>
    <variation>T</variation>
    <location>
        <position position="121"/>
    </location>
</feature>
<feature type="sequence conflict" description="In Ref. 3; CAA61027." evidence="9" ref="3">
    <original>MAGP</original>
    <variation>YGWT</variation>
    <location>
        <begin position="271"/>
        <end position="274"/>
    </location>
</feature>
<feature type="sequence conflict" description="In Ref. 3; CAA61027." evidence="9" ref="3">
    <original>A</original>
    <variation>R</variation>
    <location>
        <position position="293"/>
    </location>
</feature>
<feature type="sequence conflict" description="In Ref. 3; CAA61027." evidence="9" ref="3">
    <original>G</original>
    <variation>R</variation>
    <location>
        <position position="312"/>
    </location>
</feature>
<feature type="sequence conflict" description="In Ref. 3; CAA61027." evidence="9" ref="3">
    <original>DDFASE</original>
    <variation>TDLER</variation>
    <location>
        <begin position="349"/>
        <end position="354"/>
    </location>
</feature>
<feature type="sequence conflict" description="In Ref. 3; CAA61027." evidence="9" ref="3">
    <original>D</original>
    <variation>E</variation>
    <location>
        <position position="520"/>
    </location>
</feature>
<feature type="sequence conflict" description="In Ref. 3; CAA61027." evidence="9" ref="3">
    <original>EN</original>
    <variation>GD</variation>
    <location>
        <begin position="526"/>
        <end position="527"/>
    </location>
</feature>
<feature type="sequence conflict" description="In Ref. 3; CAA61027." evidence="9" ref="3">
    <original>L</original>
    <variation>V</variation>
    <location>
        <position position="539"/>
    </location>
</feature>
<feature type="sequence conflict" description="In Ref. 3; CAA61027." evidence="9" ref="3">
    <original>GA</original>
    <variation>AQ</variation>
    <location>
        <begin position="545"/>
        <end position="546"/>
    </location>
</feature>
<feature type="sequence conflict" description="In Ref. 3; CAA61027." evidence="9" ref="3">
    <original>A</original>
    <variation>R</variation>
    <location>
        <position position="630"/>
    </location>
</feature>
<feature type="sequence conflict" description="In Ref. 3; CAA61027." evidence="9" ref="3">
    <original>FFAAVYALYHTAQFVRSGHNVWRKSLLVFESFYSFVNMCFAWFGLANYYIFFRILT</original>
    <variation>SP</variation>
    <location>
        <begin position="692"/>
        <end position="747"/>
    </location>
</feature>
<feature type="sequence conflict" description="In Ref. 3; CAA61027." evidence="9" ref="3">
    <original>L</original>
    <variation>W</variation>
    <location>
        <position position="882"/>
    </location>
</feature>
<feature type="sequence conflict" description="In Ref. 3; CAA61027." evidence="9" ref="3">
    <original>F</original>
    <variation>M</variation>
    <location>
        <position position="885"/>
    </location>
</feature>
<sequence length="1029" mass="113242">MAYYSRPASAGAARAQDDQDPYPYYPDPDLIVGSGANTSFVNPYEASGAASSASHTSPFSDAHAASASPASILPLSHQQVSAHAPQQQHMSISVDPRDGQQSRMPGLSESFYSQAAYALASPPPAAGALSPSAHLATLPEHSQAPLSGSVDGEYTYYSQSAAGHYSSLAHRHGQDDEDDDDAETKYSPSSAHDEKYAYDRPDSAAAGTSPFGRAAGIAYLQSPYAQVARNDDDDEDEDAEDPYRVLTRDSAFGGDNGQGYDPNSAYGGAGMAGPTGQFGDNHFDTQHFGPAPARGAQLRRHKTKKNVRLTKGNLILDCPVPTKLQTFLTRRAEDEFTTMRYSAVTCDPDDFASESFTLRPALYGRHTELFIAITMYNEDEVLFCRTFHGVMKNIAHLCSRNKSRTWGKDGWKKVVVAIISDGRKKIHPRVLDCLAALGVYQDGVAKNMVDGKEVRAHLYEYTTQLSIDSNLQFKGAERGLVPMQIIFCLKEKNAKKINSHRWFFNAFCPILQPNVTILLDVGTRPENKSIYYLWKSFDLNSNVAGACGEICAETKGKWGVGPLLLNPLVAAQNFEYKISNILDKTTESVMGYISVLPGAFSAYRYIALQNDEFGHGPLASYFKGENLLGADADVFTSNMYLAEDRILCFELAAKRGHGWVLKYVKSARGVTDVPEGLPEFISQRRRWLNGSFFAAVYALYHTAQFVRSGHNVWRKSLLVFESFYSFVNMCFAWFGLANYYIFFRILTTSLEDPTFKLRGIGVFNVFMQYIYLGTVVSSFIFAMGNRPQGSKWKYWAAVVVFALLTVYMMVAAVLCLSKVVARVEHDAIYAQMVVSLLATYGVYLISSLLACDPLHLITSFLQYLLLAPTYINILNIYAFCNLHDFSWGTKGDTSISADLGAVVSTSKGTVEITLPTAQADIDTAYDDALNNLRTRPMIIRGDASNAEKEARQMDYYKNIRTNVVLAWALSNGVLAAFILNGDAAGTFSDTGGVTRTKVYMVLVLIFVAGMACIRFIGSTLYLTIRLING</sequence>
<comment type="function">
    <text evidence="10">Polymerizes chitin, a structural polymer of the cell wall and septum, by transferring the sugar moiety of UDP-GlcNAc to the non-reducing end of the growing chitin polymer.</text>
</comment>
<comment type="catalytic activity">
    <reaction evidence="10">
        <text>[(1-&gt;4)-N-acetyl-beta-D-glucosaminyl](n) + UDP-N-acetyl-alpha-D-glucosamine = [(1-&gt;4)-N-acetyl-beta-D-glucosaminyl](n+1) + UDP + H(+)</text>
        <dbReference type="Rhea" id="RHEA:16637"/>
        <dbReference type="Rhea" id="RHEA-COMP:9593"/>
        <dbReference type="Rhea" id="RHEA-COMP:9595"/>
        <dbReference type="ChEBI" id="CHEBI:15378"/>
        <dbReference type="ChEBI" id="CHEBI:17029"/>
        <dbReference type="ChEBI" id="CHEBI:57705"/>
        <dbReference type="ChEBI" id="CHEBI:58223"/>
        <dbReference type="EC" id="2.4.1.16"/>
    </reaction>
    <physiologicalReaction direction="left-to-right" evidence="10">
        <dbReference type="Rhea" id="RHEA:16638"/>
    </physiologicalReaction>
</comment>
<comment type="subcellular location">
    <subcellularLocation>
        <location evidence="3">Cell membrane</location>
        <topology evidence="1">Multi-pass membrane protein</topology>
    </subcellularLocation>
    <subcellularLocation>
        <location evidence="4">Cytoplasmic vesicle membrane</location>
        <topology evidence="1">Multi-pass membrane protein</topology>
    </subcellularLocation>
    <text evidence="3 4">A constitutive cytoplasmic pool is present that localizes to intracellular microvesicles termed chitosomes. Chitosomes constitute a separate secretory route distinct from the typical secretory pathway and serve as a vehicle for delivering the enzyme to the sites on the cell surface where polysaccharide sythesis takes place. Localizes to septa of yeast-like cells and to the basal septum separating the living tip cell from the vacuolated part in hyphae.</text>
</comment>
<comment type="induction">
    <text evidence="5 6">Expression is up-regulated in the mycelial form and shows a maximal expression in the log phase at about 14-18 h of incubation.</text>
</comment>
<comment type="similarity">
    <text evidence="9">Belongs to the chitin synthase family. Class I subfamily.</text>
</comment>
<comment type="sequence caution" evidence="9">
    <conflict type="frameshift">
        <sequence resource="EMBL-CDS" id="CAA61027"/>
    </conflict>
</comment>
<comment type="sequence caution" evidence="9">
    <conflict type="miscellaneous discrepancy">
        <sequence resource="EMBL-CDS" id="CAA61027"/>
    </conflict>
    <text>Internal deletion and contaminating sequence at the C-terminus from position 892 onwards.</text>
</comment>
<dbReference type="EC" id="2.4.1.16" evidence="10"/>
<dbReference type="EMBL" id="CM003140">
    <property type="protein sequence ID" value="KIS72052.1"/>
    <property type="molecule type" value="Genomic_DNA"/>
</dbReference>
<dbReference type="EMBL" id="X87748">
    <property type="protein sequence ID" value="CAA61027.1"/>
    <property type="status" value="ALT_SEQ"/>
    <property type="molecule type" value="Genomic_DNA"/>
</dbReference>
<dbReference type="PIR" id="S55520">
    <property type="entry name" value="S55520"/>
</dbReference>
<dbReference type="RefSeq" id="XP_011386676.1">
    <property type="nucleotide sequence ID" value="XM_011388374.1"/>
</dbReference>
<dbReference type="SMR" id="Q99126"/>
<dbReference type="STRING" id="237631.Q99126"/>
<dbReference type="CAZy" id="GT2">
    <property type="family name" value="Glycosyltransferase Family 2"/>
</dbReference>
<dbReference type="GlyCosmos" id="Q99126">
    <property type="glycosylation" value="5 sites, No reported glycans"/>
</dbReference>
<dbReference type="EnsemblFungi" id="KIS72052">
    <property type="protein sequence ID" value="KIS72052"/>
    <property type="gene ID" value="UMAG_10120"/>
</dbReference>
<dbReference type="GeneID" id="23566189"/>
<dbReference type="KEGG" id="uma:UMAG_10120"/>
<dbReference type="VEuPathDB" id="FungiDB:UMAG_10120"/>
<dbReference type="eggNOG" id="KOG2571">
    <property type="taxonomic scope" value="Eukaryota"/>
</dbReference>
<dbReference type="InParanoid" id="Q99126"/>
<dbReference type="OrthoDB" id="26569at2759"/>
<dbReference type="BioCyc" id="MetaCyc:MONOMER-17189"/>
<dbReference type="BRENDA" id="2.4.1.16">
    <property type="organism ID" value="6587"/>
</dbReference>
<dbReference type="PHI-base" id="PHI:1110"/>
<dbReference type="Proteomes" id="UP000000561">
    <property type="component" value="Chromosome 1"/>
</dbReference>
<dbReference type="GO" id="GO:0071944">
    <property type="term" value="C:cell periphery"/>
    <property type="evidence" value="ECO:0000318"/>
    <property type="project" value="GO_Central"/>
</dbReference>
<dbReference type="GO" id="GO:0030428">
    <property type="term" value="C:cell septum"/>
    <property type="evidence" value="ECO:0000318"/>
    <property type="project" value="GO_Central"/>
</dbReference>
<dbReference type="GO" id="GO:0030659">
    <property type="term" value="C:cytoplasmic vesicle membrane"/>
    <property type="evidence" value="ECO:0007669"/>
    <property type="project" value="UniProtKB-SubCell"/>
</dbReference>
<dbReference type="GO" id="GO:0005886">
    <property type="term" value="C:plasma membrane"/>
    <property type="evidence" value="ECO:0007669"/>
    <property type="project" value="UniProtKB-SubCell"/>
</dbReference>
<dbReference type="GO" id="GO:0004100">
    <property type="term" value="F:chitin synthase activity"/>
    <property type="evidence" value="ECO:0000318"/>
    <property type="project" value="GO_Central"/>
</dbReference>
<dbReference type="GO" id="GO:0071555">
    <property type="term" value="P:cell wall organization"/>
    <property type="evidence" value="ECO:0007669"/>
    <property type="project" value="UniProtKB-KW"/>
</dbReference>
<dbReference type="GO" id="GO:0006031">
    <property type="term" value="P:chitin biosynthetic process"/>
    <property type="evidence" value="ECO:0000318"/>
    <property type="project" value="GO_Central"/>
</dbReference>
<dbReference type="CDD" id="cd04190">
    <property type="entry name" value="Chitin_synth_C"/>
    <property type="match status" value="1"/>
</dbReference>
<dbReference type="InterPro" id="IPR004835">
    <property type="entry name" value="Chitin_synth"/>
</dbReference>
<dbReference type="InterPro" id="IPR004834">
    <property type="entry name" value="Chitin_synth_fun"/>
</dbReference>
<dbReference type="InterPro" id="IPR013616">
    <property type="entry name" value="Chitin_synth_N"/>
</dbReference>
<dbReference type="InterPro" id="IPR029044">
    <property type="entry name" value="Nucleotide-diphossugar_trans"/>
</dbReference>
<dbReference type="PANTHER" id="PTHR22914">
    <property type="entry name" value="CHITIN SYNTHASE"/>
    <property type="match status" value="1"/>
</dbReference>
<dbReference type="PANTHER" id="PTHR22914:SF38">
    <property type="entry name" value="CHITIN SYNTHASE 2"/>
    <property type="match status" value="1"/>
</dbReference>
<dbReference type="Pfam" id="PF01644">
    <property type="entry name" value="Chitin_synth_1"/>
    <property type="match status" value="1"/>
</dbReference>
<dbReference type="Pfam" id="PF08407">
    <property type="entry name" value="Chitin_synth_1N"/>
    <property type="match status" value="1"/>
</dbReference>
<dbReference type="SUPFAM" id="SSF53448">
    <property type="entry name" value="Nucleotide-diphospho-sugar transferases"/>
    <property type="match status" value="1"/>
</dbReference>
<reference key="1">
    <citation type="journal article" date="2006" name="Nature">
        <title>Insights from the genome of the biotrophic fungal plant pathogen Ustilago maydis.</title>
        <authorList>
            <person name="Kaemper J."/>
            <person name="Kahmann R."/>
            <person name="Boelker M."/>
            <person name="Ma L.-J."/>
            <person name="Brefort T."/>
            <person name="Saville B.J."/>
            <person name="Banuett F."/>
            <person name="Kronstad J.W."/>
            <person name="Gold S.E."/>
            <person name="Mueller O."/>
            <person name="Perlin M.H."/>
            <person name="Woesten H.A.B."/>
            <person name="de Vries R."/>
            <person name="Ruiz-Herrera J."/>
            <person name="Reynaga-Pena C.G."/>
            <person name="Snetselaar K."/>
            <person name="McCann M."/>
            <person name="Perez-Martin J."/>
            <person name="Feldbruegge M."/>
            <person name="Basse C.W."/>
            <person name="Steinberg G."/>
            <person name="Ibeas J.I."/>
            <person name="Holloman W."/>
            <person name="Guzman P."/>
            <person name="Farman M.L."/>
            <person name="Stajich J.E."/>
            <person name="Sentandreu R."/>
            <person name="Gonzalez-Prieto J.M."/>
            <person name="Kennell J.C."/>
            <person name="Molina L."/>
            <person name="Schirawski J."/>
            <person name="Mendoza-Mendoza A."/>
            <person name="Greilinger D."/>
            <person name="Muench K."/>
            <person name="Roessel N."/>
            <person name="Scherer M."/>
            <person name="Vranes M."/>
            <person name="Ladendorf O."/>
            <person name="Vincon V."/>
            <person name="Fuchs U."/>
            <person name="Sandrock B."/>
            <person name="Meng S."/>
            <person name="Ho E.C.H."/>
            <person name="Cahill M.J."/>
            <person name="Boyce K.J."/>
            <person name="Klose J."/>
            <person name="Klosterman S.J."/>
            <person name="Deelstra H.J."/>
            <person name="Ortiz-Castellanos L."/>
            <person name="Li W."/>
            <person name="Sanchez-Alonso P."/>
            <person name="Schreier P.H."/>
            <person name="Haeuser-Hahn I."/>
            <person name="Vaupel M."/>
            <person name="Koopmann E."/>
            <person name="Friedrich G."/>
            <person name="Voss H."/>
            <person name="Schlueter T."/>
            <person name="Margolis J."/>
            <person name="Platt D."/>
            <person name="Swimmer C."/>
            <person name="Gnirke A."/>
            <person name="Chen F."/>
            <person name="Vysotskaia V."/>
            <person name="Mannhaupt G."/>
            <person name="Gueldener U."/>
            <person name="Muensterkoetter M."/>
            <person name="Haase D."/>
            <person name="Oesterheld M."/>
            <person name="Mewes H.-W."/>
            <person name="Mauceli E.W."/>
            <person name="DeCaprio D."/>
            <person name="Wade C.M."/>
            <person name="Butler J."/>
            <person name="Young S.K."/>
            <person name="Jaffe D.B."/>
            <person name="Calvo S.E."/>
            <person name="Nusbaum C."/>
            <person name="Galagan J.E."/>
            <person name="Birren B.W."/>
        </authorList>
    </citation>
    <scope>NUCLEOTIDE SEQUENCE [LARGE SCALE GENOMIC DNA]</scope>
    <source>
        <strain>DSM 14603 / FGSC 9021 / UM521</strain>
    </source>
</reference>
<reference key="2">
    <citation type="submission" date="2014-09" db="EMBL/GenBank/DDBJ databases">
        <authorList>
            <person name="Gueldener U."/>
            <person name="Muensterkoetter M."/>
            <person name="Walter M.C."/>
            <person name="Mannhaupt G."/>
            <person name="Kahmann R."/>
        </authorList>
    </citation>
    <scope>GENOME REANNOTATION</scope>
    <source>
        <strain>DSM 14603 / FGSC 9021 / UM521</strain>
    </source>
</reference>
<reference key="3">
    <citation type="journal article" date="1996" name="Microbiology">
        <title>Two chitin synthase genes from Ustilago maydis.</title>
        <authorList>
            <person name="Xoconostle-Cazares B."/>
            <person name="Leon-Ramirez C."/>
            <person name="Ruiz-Herrera J."/>
        </authorList>
    </citation>
    <scope>NUCLEOTIDE SEQUENCE [GENOMIC DNA] OF 1-891</scope>
    <source>
        <strain>RK32 / A2B3</strain>
    </source>
</reference>
<reference key="4">
    <citation type="journal article" date="2006" name="FEMS Yeast Res.">
        <title>Immunolocalization of chitin synthases in the phytopathogenic dimorphic fungus Ustilago maydis.</title>
        <authorList>
            <person name="Ruiz-Herrera J."/>
            <person name="Xoconostle-Cazares B."/>
            <person name="Reynaga-Pena C.G."/>
            <person name="Leon-Ramirez C."/>
            <person name="Carabez-Trejo A."/>
        </authorList>
    </citation>
    <scope>SUBCELLULAR LOCATION</scope>
</reference>
<reference key="5">
    <citation type="journal article" date="2006" name="Plant Cell">
        <title>Polar localizing class V myosin chitin synthases are essential during early plant infection in the plant pathogenic fungus Ustilago maydis.</title>
        <authorList>
            <person name="Weber I."/>
            <person name="Assmann D."/>
            <person name="Thines E."/>
            <person name="Steinberg G."/>
        </authorList>
    </citation>
    <scope>SUBCELLULAR LOCATION</scope>
</reference>
<reference key="6">
    <citation type="journal article" date="2012" name="Curr. Microbiol.">
        <title>Transcriptional regulation of the genes encoding chitin and beta-1,3-glucan synthases from Ustilago maydis.</title>
        <authorList>
            <person name="Robledo-Briones M."/>
            <person name="Ruiz-Herrera J."/>
        </authorList>
    </citation>
    <scope>INDUCTION</scope>
</reference>
<reference key="7">
    <citation type="journal article" date="2013" name="FEMS Yeast Res.">
        <title>Regulation of genes involved in cell wall synthesis and structure during Ustilago maydis dimorphism.</title>
        <authorList>
            <person name="Robledo-Briones M."/>
            <person name="Ruiz-Herrera J."/>
        </authorList>
    </citation>
    <scope>INDUCTION</scope>
</reference>
<protein>
    <recommendedName>
        <fullName evidence="7">Chitin synthase 3</fullName>
        <ecNumber evidence="10">2.4.1.16</ecNumber>
    </recommendedName>
    <alternativeName>
        <fullName evidence="8">Chitin synthase I</fullName>
    </alternativeName>
    <alternativeName>
        <fullName evidence="9">Chitin-UDP acetyl-glucosaminyl transferase 3</fullName>
    </alternativeName>
</protein>
<organism>
    <name type="scientific">Mycosarcoma maydis</name>
    <name type="common">Corn smut fungus</name>
    <name type="synonym">Ustilago maydis</name>
    <dbReference type="NCBI Taxonomy" id="5270"/>
    <lineage>
        <taxon>Eukaryota</taxon>
        <taxon>Fungi</taxon>
        <taxon>Dikarya</taxon>
        <taxon>Basidiomycota</taxon>
        <taxon>Ustilaginomycotina</taxon>
        <taxon>Ustilaginomycetes</taxon>
        <taxon>Ustilaginales</taxon>
        <taxon>Ustilaginaceae</taxon>
        <taxon>Mycosarcoma</taxon>
    </lineage>
</organism>
<name>CHS3_MYCMD</name>
<gene>
    <name evidence="7" type="primary">CHS3</name>
    <name evidence="8" type="synonym">CHS1</name>
    <name type="ORF">UMAG_10120</name>
</gene>
<proteinExistence type="evidence at transcript level"/>
<accession>Q99126</accession>
<accession>A0A0D1CGJ4</accession>
<accession>Q4PHD9</accession>
<evidence type="ECO:0000255" key="1"/>
<evidence type="ECO:0000256" key="2">
    <source>
        <dbReference type="SAM" id="MobiDB-lite"/>
    </source>
</evidence>
<evidence type="ECO:0000269" key="3">
    <source>
    </source>
</evidence>
<evidence type="ECO:0000269" key="4">
    <source>
    </source>
</evidence>
<evidence type="ECO:0000269" key="5">
    <source>
    </source>
</evidence>
<evidence type="ECO:0000269" key="6">
    <source>
    </source>
</evidence>
<evidence type="ECO:0000303" key="7">
    <source>
    </source>
</evidence>
<evidence type="ECO:0000303" key="8">
    <source>
    </source>
</evidence>
<evidence type="ECO:0000305" key="9"/>
<evidence type="ECO:0000305" key="10">
    <source ref="2"/>
</evidence>
<keyword id="KW-1003">Cell membrane</keyword>
<keyword id="KW-0961">Cell wall biogenesis/degradation</keyword>
<keyword id="KW-0968">Cytoplasmic vesicle</keyword>
<keyword id="KW-0325">Glycoprotein</keyword>
<keyword id="KW-0328">Glycosyltransferase</keyword>
<keyword id="KW-0472">Membrane</keyword>
<keyword id="KW-1185">Reference proteome</keyword>
<keyword id="KW-0808">Transferase</keyword>
<keyword id="KW-0812">Transmembrane</keyword>
<keyword id="KW-1133">Transmembrane helix</keyword>